<accession>Q9LZ56</accession>
<accession>C0SVM8</accession>
<sequence>MVFSSFPTYPDHSSNWQQQHQPITTTVGFTGNNINQQFLPHHPLPPQQQQTPPQLHHNNGNGGVAVPGGPGGLIRPGSMAERARLANIPLPETALKCPRCDSTNTKFCYFNNYSLTQPRHFCKACRRYWTRGGALRSVPVGGGCRRNKRTKNSSGGGGGSTSSGNSKSQDSATSNDQYHHRAMANNQMGPPSSSSSLSSLLSSYNAGLIPGHDHNSNNNNILGLGSSLPPLKLMPPLDFTDNFTLQYGAVSAPSYHIGGGSSGGAAALLNGFDQWRFPATNQLPLGGLDPFDQQHQMEQQNPGYGLVTGSGQYRPKNIFHNLISSSSSASSAMVTATASQLASVKMEDSNNQLNLSRQLFGDEQQLWNIHGAAAASTAAATSSWSEVSNNFSSSSTSNI</sequence>
<dbReference type="EMBL" id="AB493731">
    <property type="protein sequence ID" value="BAH30569.1"/>
    <property type="molecule type" value="mRNA"/>
</dbReference>
<dbReference type="EMBL" id="AL162874">
    <property type="status" value="NOT_ANNOTATED_CDS"/>
    <property type="molecule type" value="Genomic_DNA"/>
</dbReference>
<dbReference type="EMBL" id="AL162971">
    <property type="protein sequence ID" value="CAB85983.1"/>
    <property type="molecule type" value="Genomic_DNA"/>
</dbReference>
<dbReference type="EMBL" id="CP002688">
    <property type="protein sequence ID" value="AED90474.1"/>
    <property type="molecule type" value="Genomic_DNA"/>
</dbReference>
<dbReference type="EMBL" id="BX829408">
    <property type="status" value="NOT_ANNOTATED_CDS"/>
    <property type="molecule type" value="mRNA"/>
</dbReference>
<dbReference type="PIR" id="T48267">
    <property type="entry name" value="T48267"/>
</dbReference>
<dbReference type="RefSeq" id="NP_195866.1">
    <property type="nucleotide sequence ID" value="NM_120324.4"/>
</dbReference>
<dbReference type="FunCoup" id="Q9LZ56">
    <property type="interactions" value="25"/>
</dbReference>
<dbReference type="STRING" id="3702.Q9LZ56"/>
<dbReference type="PaxDb" id="3702-AT5G02460.1"/>
<dbReference type="ProteomicsDB" id="222124"/>
<dbReference type="EnsemblPlants" id="AT5G02460.1">
    <property type="protein sequence ID" value="AT5G02460.1"/>
    <property type="gene ID" value="AT5G02460"/>
</dbReference>
<dbReference type="GeneID" id="830976"/>
<dbReference type="Gramene" id="AT5G02460.1">
    <property type="protein sequence ID" value="AT5G02460.1"/>
    <property type="gene ID" value="AT5G02460"/>
</dbReference>
<dbReference type="KEGG" id="ath:AT5G02460"/>
<dbReference type="Araport" id="AT5G02460"/>
<dbReference type="TAIR" id="AT5G02460">
    <property type="gene designation" value="PEAR2"/>
</dbReference>
<dbReference type="eggNOG" id="ENOG502QTHW">
    <property type="taxonomic scope" value="Eukaryota"/>
</dbReference>
<dbReference type="HOGENOM" id="CLU_036438_0_3_1"/>
<dbReference type="InParanoid" id="Q9LZ56"/>
<dbReference type="OMA" id="ANIHMPE"/>
<dbReference type="OrthoDB" id="1927254at2759"/>
<dbReference type="PhylomeDB" id="Q9LZ56"/>
<dbReference type="PRO" id="PR:Q9LZ56"/>
<dbReference type="Proteomes" id="UP000006548">
    <property type="component" value="Chromosome 5"/>
</dbReference>
<dbReference type="ExpressionAtlas" id="Q9LZ56">
    <property type="expression patterns" value="baseline and differential"/>
</dbReference>
<dbReference type="GO" id="GO:0005634">
    <property type="term" value="C:nucleus"/>
    <property type="evidence" value="ECO:0000314"/>
    <property type="project" value="UniProtKB"/>
</dbReference>
<dbReference type="GO" id="GO:0003677">
    <property type="term" value="F:DNA binding"/>
    <property type="evidence" value="ECO:0007669"/>
    <property type="project" value="UniProtKB-KW"/>
</dbReference>
<dbReference type="GO" id="GO:0003700">
    <property type="term" value="F:DNA-binding transcription factor activity"/>
    <property type="evidence" value="ECO:0000250"/>
    <property type="project" value="TAIR"/>
</dbReference>
<dbReference type="GO" id="GO:0008270">
    <property type="term" value="F:zinc ion binding"/>
    <property type="evidence" value="ECO:0007669"/>
    <property type="project" value="UniProtKB-KW"/>
</dbReference>
<dbReference type="GO" id="GO:0010497">
    <property type="term" value="P:plasmodesmata-mediated intercellular transport"/>
    <property type="evidence" value="ECO:0000314"/>
    <property type="project" value="TAIR"/>
</dbReference>
<dbReference type="GO" id="GO:0009944">
    <property type="term" value="P:polarity specification of adaxial/abaxial axis"/>
    <property type="evidence" value="ECO:0000315"/>
    <property type="project" value="UniProtKB"/>
</dbReference>
<dbReference type="GO" id="GO:0006355">
    <property type="term" value="P:regulation of DNA-templated transcription"/>
    <property type="evidence" value="ECO:0000314"/>
    <property type="project" value="UniProtKB"/>
</dbReference>
<dbReference type="GO" id="GO:0090057">
    <property type="term" value="P:root radial pattern formation"/>
    <property type="evidence" value="ECO:0000316"/>
    <property type="project" value="TAIR"/>
</dbReference>
<dbReference type="InterPro" id="IPR045174">
    <property type="entry name" value="Dof"/>
</dbReference>
<dbReference type="InterPro" id="IPR003851">
    <property type="entry name" value="Znf_Dof"/>
</dbReference>
<dbReference type="PANTHER" id="PTHR31992">
    <property type="entry name" value="DOF ZINC FINGER PROTEIN DOF1.4-RELATED"/>
    <property type="match status" value="1"/>
</dbReference>
<dbReference type="PANTHER" id="PTHR31992:SF252">
    <property type="entry name" value="DOF ZINC FINGER PROTEIN DOF5.1"/>
    <property type="match status" value="1"/>
</dbReference>
<dbReference type="Pfam" id="PF02701">
    <property type="entry name" value="Zn_ribbon_Dof"/>
    <property type="match status" value="1"/>
</dbReference>
<dbReference type="PROSITE" id="PS01361">
    <property type="entry name" value="ZF_DOF_1"/>
    <property type="match status" value="1"/>
</dbReference>
<dbReference type="PROSITE" id="PS50884">
    <property type="entry name" value="ZF_DOF_2"/>
    <property type="match status" value="1"/>
</dbReference>
<evidence type="ECO:0000250" key="1">
    <source>
        <dbReference type="UniProtKB" id="Q9M2U1"/>
    </source>
</evidence>
<evidence type="ECO:0000255" key="2">
    <source>
        <dbReference type="PROSITE-ProRule" id="PRU00071"/>
    </source>
</evidence>
<evidence type="ECO:0000256" key="3">
    <source>
        <dbReference type="SAM" id="MobiDB-lite"/>
    </source>
</evidence>
<evidence type="ECO:0000269" key="4">
    <source>
    </source>
</evidence>
<evidence type="ECO:0000269" key="5">
    <source>
    </source>
</evidence>
<evidence type="ECO:0000269" key="6">
    <source>
    </source>
</evidence>
<evidence type="ECO:0000303" key="7">
    <source>
    </source>
</evidence>
<evidence type="ECO:0000303" key="8">
    <source>
    </source>
</evidence>
<evidence type="ECO:0000312" key="9">
    <source>
        <dbReference type="Araport" id="AT5G02460"/>
    </source>
</evidence>
<evidence type="ECO:0000312" key="10">
    <source>
        <dbReference type="EMBL" id="AL162874"/>
    </source>
</evidence>
<evidence type="ECO:0000312" key="11">
    <source>
        <dbReference type="EMBL" id="CAB85983.1"/>
    </source>
</evidence>
<organism>
    <name type="scientific">Arabidopsis thaliana</name>
    <name type="common">Mouse-ear cress</name>
    <dbReference type="NCBI Taxonomy" id="3702"/>
    <lineage>
        <taxon>Eukaryota</taxon>
        <taxon>Viridiplantae</taxon>
        <taxon>Streptophyta</taxon>
        <taxon>Embryophyta</taxon>
        <taxon>Tracheophyta</taxon>
        <taxon>Spermatophyta</taxon>
        <taxon>Magnoliopsida</taxon>
        <taxon>eudicotyledons</taxon>
        <taxon>Gunneridae</taxon>
        <taxon>Pentapetalae</taxon>
        <taxon>rosids</taxon>
        <taxon>malvids</taxon>
        <taxon>Brassicales</taxon>
        <taxon>Brassicaceae</taxon>
        <taxon>Camelineae</taxon>
        <taxon>Arabidopsis</taxon>
    </lineage>
</organism>
<keyword id="KW-0010">Activator</keyword>
<keyword id="KW-0238">DNA-binding</keyword>
<keyword id="KW-0479">Metal-binding</keyword>
<keyword id="KW-0539">Nucleus</keyword>
<keyword id="KW-1185">Reference proteome</keyword>
<keyword id="KW-0804">Transcription</keyword>
<keyword id="KW-0805">Transcription regulation</keyword>
<keyword id="KW-0862">Zinc</keyword>
<keyword id="KW-0863">Zinc-finger</keyword>
<protein>
    <recommendedName>
        <fullName evidence="7">Dof zinc finger protein DOF5.1</fullName>
        <shortName evidence="7">AtDOF5.1</shortName>
    </recommendedName>
    <alternativeName>
        <fullName evidence="8">Protein PHLOEM EARLY DOF 2</fullName>
    </alternativeName>
</protein>
<comment type="function">
    <text evidence="1 4 5 6">Transcription factor that binds specifically to a 5'-AA[AG]G-3' consensus core sequence (By similarity). Binds to 5'-TAAAGT-3' motif in REV promoter to triggers its transcription, thus regulating adaxial-abaxial polarity and influencing leaf axial patterning in an auxin transport- and response-dependent manner (e.g. IAA6 and IAA19 genes expression) (PubMed:20807212). Probably involved in early processes for vascular development (PubMed:17583520). The PEAR proteins (e.g. DOF2.4, DOF5.1, DOF3.2, DOF1.1, DOF5.6 and DOF5.3) activate gene expression that promotes radial growth of protophloem sieve elements (PubMed:30626969).</text>
</comment>
<comment type="subcellular location">
    <subcellularLocation>
        <location evidence="2 5">Nucleus</location>
    </subcellularLocation>
</comment>
<comment type="tissue specificity">
    <text evidence="4 5 6">Expressed ubiquitously, especially in the vascular tissues, except in seeds, petals and anthers (PubMed:20807212). Specific to the vascular tissues in young leaves, cotyledons and flower buds (PubMed:17583520). The PEAR proteins (e.g. DOF2.4, DOF5.1, DOF3.2, DOF1.1, DOF5.6 and DOF5.3) form a short-range concentration gradient that peaks at protophloem sieve elements (PSE) (PubMed:30626969).</text>
</comment>
<comment type="developmental stage">
    <text evidence="4">Specific to both elongating procambial cells and to cells isodiametric in size that are presumably destined to develop into higher-order veins. Strongly expressed in advance of perceptible procambium formation. Expressed in the cells of prospective veins in leaf primordia of seedlings and cotyledons of developing embryos, and the vascular tissue of developing flower buds.</text>
</comment>
<comment type="induction">
    <text evidence="6">By cytokinin in procambium.</text>
</comment>
<comment type="disruption phenotype">
    <text evidence="5 6">Narrow and down-wardly curled leaves (PubMed:20807212). The pear1 pear2 tmo6 triple mutant variably displays reduced radial growth. The pear1 pear2 dof6 tmo6 quadruple mutant plants showed a greater uniform reduction in radial growth, associated with compromised symplastic trafficking (PubMed:30626969).</text>
</comment>
<reference key="1">
    <citation type="submission" date="2009-03" db="EMBL/GenBank/DDBJ databases">
        <title>ORF cloning and analysis of Arabidopsis transcription factor genes.</title>
        <authorList>
            <person name="Fujita M."/>
        </authorList>
    </citation>
    <scope>NUCLEOTIDE SEQUENCE [MRNA]</scope>
</reference>
<reference key="2">
    <citation type="journal article" date="2000" name="Nature">
        <title>Sequence and analysis of chromosome 5 of the plant Arabidopsis thaliana.</title>
        <authorList>
            <person name="Tabata S."/>
            <person name="Kaneko T."/>
            <person name="Nakamura Y."/>
            <person name="Kotani H."/>
            <person name="Kato T."/>
            <person name="Asamizu E."/>
            <person name="Miyajima N."/>
            <person name="Sasamoto S."/>
            <person name="Kimura T."/>
            <person name="Hosouchi T."/>
            <person name="Kawashima K."/>
            <person name="Kohara M."/>
            <person name="Matsumoto M."/>
            <person name="Matsuno A."/>
            <person name="Muraki A."/>
            <person name="Nakayama S."/>
            <person name="Nakazaki N."/>
            <person name="Naruo K."/>
            <person name="Okumura S."/>
            <person name="Shinpo S."/>
            <person name="Takeuchi C."/>
            <person name="Wada T."/>
            <person name="Watanabe A."/>
            <person name="Yamada M."/>
            <person name="Yasuda M."/>
            <person name="Sato S."/>
            <person name="de la Bastide M."/>
            <person name="Huang E."/>
            <person name="Spiegel L."/>
            <person name="Gnoj L."/>
            <person name="O'Shaughnessy A."/>
            <person name="Preston R."/>
            <person name="Habermann K."/>
            <person name="Murray J."/>
            <person name="Johnson D."/>
            <person name="Rohlfing T."/>
            <person name="Nelson J."/>
            <person name="Stoneking T."/>
            <person name="Pepin K."/>
            <person name="Spieth J."/>
            <person name="Sekhon M."/>
            <person name="Armstrong J."/>
            <person name="Becker M."/>
            <person name="Belter E."/>
            <person name="Cordum H."/>
            <person name="Cordes M."/>
            <person name="Courtney L."/>
            <person name="Courtney W."/>
            <person name="Dante M."/>
            <person name="Du H."/>
            <person name="Edwards J."/>
            <person name="Fryman J."/>
            <person name="Haakensen B."/>
            <person name="Lamar E."/>
            <person name="Latreille P."/>
            <person name="Leonard S."/>
            <person name="Meyer R."/>
            <person name="Mulvaney E."/>
            <person name="Ozersky P."/>
            <person name="Riley A."/>
            <person name="Strowmatt C."/>
            <person name="Wagner-McPherson C."/>
            <person name="Wollam A."/>
            <person name="Yoakum M."/>
            <person name="Bell M."/>
            <person name="Dedhia N."/>
            <person name="Parnell L."/>
            <person name="Shah R."/>
            <person name="Rodriguez M."/>
            <person name="Hoon See L."/>
            <person name="Vil D."/>
            <person name="Baker J."/>
            <person name="Kirchoff K."/>
            <person name="Toth K."/>
            <person name="King L."/>
            <person name="Bahret A."/>
            <person name="Miller B."/>
            <person name="Marra M.A."/>
            <person name="Martienssen R."/>
            <person name="McCombie W.R."/>
            <person name="Wilson R.K."/>
            <person name="Murphy G."/>
            <person name="Bancroft I."/>
            <person name="Volckaert G."/>
            <person name="Wambutt R."/>
            <person name="Duesterhoeft A."/>
            <person name="Stiekema W."/>
            <person name="Pohl T."/>
            <person name="Entian K.-D."/>
            <person name="Terryn N."/>
            <person name="Hartley N."/>
            <person name="Bent E."/>
            <person name="Johnson S."/>
            <person name="Langham S.-A."/>
            <person name="McCullagh B."/>
            <person name="Robben J."/>
            <person name="Grymonprez B."/>
            <person name="Zimmermann W."/>
            <person name="Ramsperger U."/>
            <person name="Wedler H."/>
            <person name="Balke K."/>
            <person name="Wedler E."/>
            <person name="Peters S."/>
            <person name="van Staveren M."/>
            <person name="Dirkse W."/>
            <person name="Mooijman P."/>
            <person name="Klein Lankhorst R."/>
            <person name="Weitzenegger T."/>
            <person name="Bothe G."/>
            <person name="Rose M."/>
            <person name="Hauf J."/>
            <person name="Berneiser S."/>
            <person name="Hempel S."/>
            <person name="Feldpausch M."/>
            <person name="Lamberth S."/>
            <person name="Villarroel R."/>
            <person name="Gielen J."/>
            <person name="Ardiles W."/>
            <person name="Bents O."/>
            <person name="Lemcke K."/>
            <person name="Kolesov G."/>
            <person name="Mayer K.F.X."/>
            <person name="Rudd S."/>
            <person name="Schoof H."/>
            <person name="Schueller C."/>
            <person name="Zaccaria P."/>
            <person name="Mewes H.-W."/>
            <person name="Bevan M."/>
            <person name="Fransz P.F."/>
        </authorList>
    </citation>
    <scope>NUCLEOTIDE SEQUENCE [LARGE SCALE GENOMIC DNA]</scope>
    <source>
        <strain>cv. Columbia</strain>
    </source>
</reference>
<reference key="3">
    <citation type="journal article" date="2017" name="Plant J.">
        <title>Araport11: a complete reannotation of the Arabidopsis thaliana reference genome.</title>
        <authorList>
            <person name="Cheng C.Y."/>
            <person name="Krishnakumar V."/>
            <person name="Chan A.P."/>
            <person name="Thibaud-Nissen F."/>
            <person name="Schobel S."/>
            <person name="Town C.D."/>
        </authorList>
    </citation>
    <scope>GENOME REANNOTATION</scope>
    <source>
        <strain>cv. Columbia</strain>
    </source>
</reference>
<reference key="4">
    <citation type="journal article" date="2004" name="Genome Res.">
        <title>Whole genome sequence comparisons and 'full-length' cDNA sequences: a combined approach to evaluate and improve Arabidopsis genome annotation.</title>
        <authorList>
            <person name="Castelli V."/>
            <person name="Aury J.-M."/>
            <person name="Jaillon O."/>
            <person name="Wincker P."/>
            <person name="Clepet C."/>
            <person name="Menard M."/>
            <person name="Cruaud C."/>
            <person name="Quetier F."/>
            <person name="Scarpelli C."/>
            <person name="Schaechter V."/>
            <person name="Temple G."/>
            <person name="Caboche M."/>
            <person name="Weissenbach J."/>
            <person name="Salanoubat M."/>
        </authorList>
    </citation>
    <scope>NUCLEOTIDE SEQUENCE [LARGE SCALE MRNA]</scope>
    <source>
        <strain>cv. Columbia</strain>
    </source>
</reference>
<reference key="5">
    <citation type="journal article" date="2002" name="Trends Plant Sci.">
        <title>The Dof family of plant transcription factors.</title>
        <authorList>
            <person name="Yanagisawa S."/>
        </authorList>
    </citation>
    <scope>GENE FAMILY</scope>
    <scope>NOMENCLATURE</scope>
</reference>
<reference key="6">
    <citation type="journal article" date="2007" name="Plant Physiol. Biochem.">
        <title>Sequential activation of two Dof transcription factor gene promoters during vascular development in Arabidopsis thaliana.</title>
        <authorList>
            <person name="Konishi M."/>
            <person name="Yanagisawa S."/>
        </authorList>
    </citation>
    <scope>TISSUE SPECIFICITY</scope>
    <scope>DEVELOPMENTAL STAGE</scope>
    <source>
        <strain>cv. Columbia</strain>
    </source>
</reference>
<reference key="7">
    <citation type="journal article" date="2010" name="Plant J.">
        <title>The DOF transcription factor Dof5.1 influences leaf axial patterning by promoting Revoluta transcription in Arabidopsis.</title>
        <authorList>
            <person name="Kim H.-S."/>
            <person name="Kim S.J."/>
            <person name="Abbasi N."/>
            <person name="Bressan R.A."/>
            <person name="Yun D.-J."/>
            <person name="Yoo S.-D."/>
            <person name="Kwon S.-Y."/>
            <person name="Choi S.-B."/>
        </authorList>
    </citation>
    <scope>FUNCTION</scope>
    <scope>DISRUPTION PHENOTYPE</scope>
    <scope>SUBCELLULAR LOCATION</scope>
    <scope>TISSUE SPECIFICITY</scope>
    <source>
        <strain>cv. C24</strain>
        <strain>cv. Columbia</strain>
    </source>
</reference>
<reference key="8">
    <citation type="journal article" date="2019" name="Nature">
        <title>Mobile PEAR transcription factors integrate positional cues to prime cambial growth.</title>
        <authorList>
            <person name="Miyashima S."/>
            <person name="Roszak P."/>
            <person name="Sevilem I."/>
            <person name="Toyokura K."/>
            <person name="Blob B."/>
            <person name="Heo J.-O."/>
            <person name="Mellor N."/>
            <person name="Help-Rinta-Rahko H."/>
            <person name="Otero S."/>
            <person name="Smet W."/>
            <person name="Boekschoten M."/>
            <person name="Hooiveld G."/>
            <person name="Hashimoto K."/>
            <person name="Smetana O."/>
            <person name="Siligato R."/>
            <person name="Wallner E.-S."/>
            <person name="Maehoenen A.P."/>
            <person name="Kondo Y."/>
            <person name="Melnyk C.W."/>
            <person name="Greb T."/>
            <person name="Nakajima K."/>
            <person name="Sozzani R."/>
            <person name="Bishopp A."/>
            <person name="De Rybel B."/>
            <person name="Helariutta Y."/>
        </authorList>
    </citation>
    <scope>FUNCTION</scope>
    <scope>DISRUPTION PHENOTYPE</scope>
    <scope>TISSUE SPECIFICITY</scope>
    <scope>INDUCTION BY CYTOKININ</scope>
</reference>
<name>DOF51_ARATH</name>
<gene>
    <name evidence="7" type="primary">DOF5.1</name>
    <name evidence="8" type="synonym">PEAR2</name>
    <name evidence="9" type="ordered locus">At5g02460</name>
    <name evidence="10" type="ORF">T1E22.3</name>
    <name evidence="11" type="ORF">T22P11_50</name>
</gene>
<proteinExistence type="evidence at transcript level"/>
<feature type="chain" id="PRO_0000074291" description="Dof zinc finger protein DOF5.1">
    <location>
        <begin position="1"/>
        <end position="399"/>
    </location>
</feature>
<feature type="zinc finger region" description="Dof-type" evidence="2">
    <location>
        <begin position="95"/>
        <end position="149"/>
    </location>
</feature>
<feature type="region of interest" description="Disordered" evidence="3">
    <location>
        <begin position="139"/>
        <end position="176"/>
    </location>
</feature>
<feature type="binding site" evidence="2">
    <location>
        <position position="97"/>
    </location>
    <ligand>
        <name>Zn(2+)</name>
        <dbReference type="ChEBI" id="CHEBI:29105"/>
    </ligand>
</feature>
<feature type="binding site" evidence="2">
    <location>
        <position position="100"/>
    </location>
    <ligand>
        <name>Zn(2+)</name>
        <dbReference type="ChEBI" id="CHEBI:29105"/>
    </ligand>
</feature>
<feature type="binding site" evidence="2">
    <location>
        <position position="122"/>
    </location>
    <ligand>
        <name>Zn(2+)</name>
        <dbReference type="ChEBI" id="CHEBI:29105"/>
    </ligand>
</feature>
<feature type="binding site" evidence="2">
    <location>
        <position position="125"/>
    </location>
    <ligand>
        <name>Zn(2+)</name>
        <dbReference type="ChEBI" id="CHEBI:29105"/>
    </ligand>
</feature>